<dbReference type="EC" id="2.4.1.-" evidence="2"/>
<dbReference type="EMBL" id="CM000132">
    <property type="protein sequence ID" value="EAZ04017.1"/>
    <property type="molecule type" value="Genomic_DNA"/>
</dbReference>
<dbReference type="SMR" id="A2YLQ6"/>
<dbReference type="STRING" id="39946.A2YLQ6"/>
<dbReference type="EnsemblPlants" id="BGIOSGA024239-TA">
    <property type="protein sequence ID" value="BGIOSGA024239-PA"/>
    <property type="gene ID" value="BGIOSGA024239"/>
</dbReference>
<dbReference type="EnsemblPlants" id="OsIR64_07g0016720.01">
    <property type="protein sequence ID" value="OsIR64_07g0016720.01"/>
    <property type="gene ID" value="OsIR64_07g0016720"/>
</dbReference>
<dbReference type="EnsemblPlants" id="OsMH63_07G016060_01">
    <property type="protein sequence ID" value="OsMH63_07G016060_01"/>
    <property type="gene ID" value="OsMH63_07G016060"/>
</dbReference>
<dbReference type="EnsemblPlants" id="OsPr106_07g0016250.01">
    <property type="protein sequence ID" value="OsPr106_07g0016250.01"/>
    <property type="gene ID" value="OsPr106_07g0016250"/>
</dbReference>
<dbReference type="Gramene" id="BGIOSGA024239-TA">
    <property type="protein sequence ID" value="BGIOSGA024239-PA"/>
    <property type="gene ID" value="BGIOSGA024239"/>
</dbReference>
<dbReference type="Gramene" id="OsIR64_07g0016720.01">
    <property type="protein sequence ID" value="OsIR64_07g0016720.01"/>
    <property type="gene ID" value="OsIR64_07g0016720"/>
</dbReference>
<dbReference type="Gramene" id="OsMH63_07G016060_01">
    <property type="protein sequence ID" value="OsMH63_07G016060_01"/>
    <property type="gene ID" value="OsMH63_07G016060"/>
</dbReference>
<dbReference type="Gramene" id="OsPr106_07g0016250.01">
    <property type="protein sequence ID" value="OsPr106_07g0016250.01"/>
    <property type="gene ID" value="OsPr106_07g0016250"/>
</dbReference>
<dbReference type="HOGENOM" id="CLU_001724_3_2_1"/>
<dbReference type="OMA" id="HEQNGEV"/>
<dbReference type="UniPathway" id="UPA00009"/>
<dbReference type="Proteomes" id="UP000007015">
    <property type="component" value="Chromosome 7"/>
</dbReference>
<dbReference type="GO" id="GO:0005783">
    <property type="term" value="C:endoplasmic reticulum"/>
    <property type="evidence" value="ECO:0000250"/>
    <property type="project" value="UniProtKB"/>
</dbReference>
<dbReference type="GO" id="GO:0005634">
    <property type="term" value="C:nucleus"/>
    <property type="evidence" value="ECO:0000250"/>
    <property type="project" value="UniProtKB"/>
</dbReference>
<dbReference type="GO" id="GO:0035251">
    <property type="term" value="F:UDP-glucosyltransferase activity"/>
    <property type="evidence" value="ECO:0007669"/>
    <property type="project" value="InterPro"/>
</dbReference>
<dbReference type="GO" id="GO:0008194">
    <property type="term" value="F:UDP-glycosyltransferase activity"/>
    <property type="evidence" value="ECO:0000250"/>
    <property type="project" value="UniProtKB"/>
</dbReference>
<dbReference type="GO" id="GO:0009718">
    <property type="term" value="P:anthocyanin-containing compound biosynthetic process"/>
    <property type="evidence" value="ECO:0000250"/>
    <property type="project" value="UniProtKB"/>
</dbReference>
<dbReference type="CDD" id="cd03784">
    <property type="entry name" value="GT1_Gtf-like"/>
    <property type="match status" value="1"/>
</dbReference>
<dbReference type="FunFam" id="3.40.50.2000:FF:000086">
    <property type="entry name" value="Glycosyltransferase"/>
    <property type="match status" value="1"/>
</dbReference>
<dbReference type="FunFam" id="3.40.50.2000:FF:000089">
    <property type="entry name" value="Glycosyltransferase"/>
    <property type="match status" value="1"/>
</dbReference>
<dbReference type="Gene3D" id="3.40.50.2000">
    <property type="entry name" value="Glycogen Phosphorylase B"/>
    <property type="match status" value="2"/>
</dbReference>
<dbReference type="InterPro" id="IPR050481">
    <property type="entry name" value="UDP-glycosyltransf_plant"/>
</dbReference>
<dbReference type="InterPro" id="IPR002213">
    <property type="entry name" value="UDP_glucos_trans"/>
</dbReference>
<dbReference type="PANTHER" id="PTHR48048">
    <property type="entry name" value="GLYCOSYLTRANSFERASE"/>
    <property type="match status" value="1"/>
</dbReference>
<dbReference type="PANTHER" id="PTHR48048:SF65">
    <property type="entry name" value="OS07G0510400 PROTEIN"/>
    <property type="match status" value="1"/>
</dbReference>
<dbReference type="Pfam" id="PF00201">
    <property type="entry name" value="UDPGT"/>
    <property type="match status" value="1"/>
</dbReference>
<dbReference type="SUPFAM" id="SSF53756">
    <property type="entry name" value="UDP-Glycosyltransferase/glycogen phosphorylase"/>
    <property type="match status" value="1"/>
</dbReference>
<accession>A2YLQ6</accession>
<gene>
    <name evidence="2" type="primary">UGT88C3</name>
    <name evidence="5" type="ORF">OsI_26156</name>
</gene>
<protein>
    <recommendedName>
        <fullName evidence="2">Malvidin galactosylase UGT88C3</fullName>
        <ecNumber evidence="2">2.4.1.-</ecNumber>
    </recommendedName>
    <alternativeName>
        <fullName evidence="2">UDP-glycosyltransferase 88C3</fullName>
        <shortName evidence="2">OsUGT88C3</shortName>
    </alternativeName>
</protein>
<sequence>MAKPTVVLLPVWGAGHFMPMIEAGKRLLRGSGGALSVTVLLMPAPTPDAAVDIAAQVKREEASGADDISFRHLPAVDMPTGHTGVEEWISRILRSHAPNVRAAIAGLDCPVAALVTDIFCTPALEVSRELGVPGYVYFPCSASMLALLLRSPGLDEEVAVEFEEMDGAIRIPGLPPVPPSALPSTMLDRKKSTYDWFVATGRGYMNATGFIVNTAAELEQSVIDAIADGRCTRGVPAPTVYPIGPVLYFPPPPEEQPHECVRWLDAQPPASVLFLCFGSKGLLPPPKVREIAAALGRSGGHRFLWVLRGPPKDSRHGQRVPTDAMLDELLPEGFLERTKGRGLVWPTRAPQKEILAHAAVGGFVTHCGWNSILESLWFGVPVLPWPLDAEQHFNAFTLVAHLGVAVPLGMDRRRDNFVEAAELERAVRSLMDDASEEGRKARAKAAETRVVCRKAVEEGGSSSTAFRRLTDDIVRRGAVQIR</sequence>
<name>UGT83_ORYSI</name>
<evidence type="ECO:0000250" key="1">
    <source>
        <dbReference type="UniProtKB" id="A0A0A1HA03"/>
    </source>
</evidence>
<evidence type="ECO:0000250" key="2">
    <source>
        <dbReference type="UniProtKB" id="A3BK75"/>
    </source>
</evidence>
<evidence type="ECO:0000250" key="3">
    <source>
        <dbReference type="UniProtKB" id="Q9M156"/>
    </source>
</evidence>
<evidence type="ECO:0000305" key="4"/>
<evidence type="ECO:0000312" key="5">
    <source>
        <dbReference type="EMBL" id="EAZ04017.1"/>
    </source>
</evidence>
<proteinExistence type="inferred from homology"/>
<organism>
    <name type="scientific">Oryza sativa subsp. indica</name>
    <name type="common">Rice</name>
    <dbReference type="NCBI Taxonomy" id="39946"/>
    <lineage>
        <taxon>Eukaryota</taxon>
        <taxon>Viridiplantae</taxon>
        <taxon>Streptophyta</taxon>
        <taxon>Embryophyta</taxon>
        <taxon>Tracheophyta</taxon>
        <taxon>Spermatophyta</taxon>
        <taxon>Magnoliopsida</taxon>
        <taxon>Liliopsida</taxon>
        <taxon>Poales</taxon>
        <taxon>Poaceae</taxon>
        <taxon>BOP clade</taxon>
        <taxon>Oryzoideae</taxon>
        <taxon>Oryzeae</taxon>
        <taxon>Oryzinae</taxon>
        <taxon>Oryza</taxon>
        <taxon>Oryza sativa</taxon>
    </lineage>
</organism>
<comment type="function">
    <text evidence="2">UDP-glycosyltransferase which uses UDP-galactose and malvidin as substrates to catalyze the biosynthesis of malvidin 3-O-galactoside, an anthocyanin conferring purple pigmentation.</text>
</comment>
<comment type="catalytic activity">
    <reaction evidence="2">
        <text>malvidin + UDP-alpha-D-galactose = malvidin 3-O-beta-D-galactoside + UDP + H(+)</text>
        <dbReference type="Rhea" id="RHEA:74131"/>
        <dbReference type="ChEBI" id="CHEBI:15378"/>
        <dbReference type="ChEBI" id="CHEBI:58223"/>
        <dbReference type="ChEBI" id="CHEBI:66914"/>
        <dbReference type="ChEBI" id="CHEBI:144781"/>
        <dbReference type="ChEBI" id="CHEBI:193100"/>
    </reaction>
    <physiologicalReaction direction="left-to-right" evidence="2">
        <dbReference type="Rhea" id="RHEA:74132"/>
    </physiologicalReaction>
</comment>
<comment type="pathway">
    <text evidence="2">Pigment biosynthesis; anthocyanin biosynthesis.</text>
</comment>
<comment type="subcellular location">
    <subcellularLocation>
        <location evidence="2">Endoplasmic reticulum</location>
    </subcellularLocation>
    <subcellularLocation>
        <location evidence="2">Nucleus</location>
    </subcellularLocation>
</comment>
<comment type="similarity">
    <text evidence="4">Belongs to the UDP-glycosyltransferase family.</text>
</comment>
<keyword id="KW-0256">Endoplasmic reticulum</keyword>
<keyword id="KW-0539">Nucleus</keyword>
<keyword id="KW-1185">Reference proteome</keyword>
<keyword id="KW-0808">Transferase</keyword>
<feature type="chain" id="PRO_0000460634" description="Malvidin galactosylase UGT88C3">
    <location>
        <begin position="1"/>
        <end position="482"/>
    </location>
</feature>
<feature type="active site" description="Proton acceptor" evidence="1">
    <location>
        <position position="16"/>
    </location>
</feature>
<feature type="active site" description="Charge relay" evidence="1">
    <location>
        <position position="117"/>
    </location>
</feature>
<feature type="binding site" evidence="3">
    <location>
        <position position="279"/>
    </location>
    <ligand>
        <name>UDP</name>
        <dbReference type="ChEBI" id="CHEBI:58223"/>
    </ligand>
</feature>
<feature type="binding site" evidence="3">
    <location>
        <position position="345"/>
    </location>
    <ligand>
        <name>UDP</name>
        <dbReference type="ChEBI" id="CHEBI:58223"/>
    </ligand>
</feature>
<feature type="binding site" evidence="3">
    <location>
        <position position="349"/>
    </location>
    <ligand>
        <name>UDP</name>
        <dbReference type="ChEBI" id="CHEBI:58223"/>
    </ligand>
</feature>
<feature type="binding site" evidence="3">
    <location>
        <position position="366"/>
    </location>
    <ligand>
        <name>UDP</name>
        <dbReference type="ChEBI" id="CHEBI:58223"/>
    </ligand>
</feature>
<feature type="binding site" evidence="3">
    <location>
        <position position="370"/>
    </location>
    <ligand>
        <name>UDP</name>
        <dbReference type="ChEBI" id="CHEBI:58223"/>
    </ligand>
</feature>
<feature type="binding site" evidence="3">
    <location>
        <position position="371"/>
    </location>
    <ligand>
        <name>UDP</name>
        <dbReference type="ChEBI" id="CHEBI:58223"/>
    </ligand>
</feature>
<feature type="binding site" evidence="3">
    <location>
        <position position="374"/>
    </location>
    <ligand>
        <name>UDP</name>
        <dbReference type="ChEBI" id="CHEBI:58223"/>
    </ligand>
</feature>
<reference key="1">
    <citation type="journal article" date="2005" name="PLoS Biol.">
        <title>The genomes of Oryza sativa: a history of duplications.</title>
        <authorList>
            <person name="Yu J."/>
            <person name="Wang J."/>
            <person name="Lin W."/>
            <person name="Li S."/>
            <person name="Li H."/>
            <person name="Zhou J."/>
            <person name="Ni P."/>
            <person name="Dong W."/>
            <person name="Hu S."/>
            <person name="Zeng C."/>
            <person name="Zhang J."/>
            <person name="Zhang Y."/>
            <person name="Li R."/>
            <person name="Xu Z."/>
            <person name="Li S."/>
            <person name="Li X."/>
            <person name="Zheng H."/>
            <person name="Cong L."/>
            <person name="Lin L."/>
            <person name="Yin J."/>
            <person name="Geng J."/>
            <person name="Li G."/>
            <person name="Shi J."/>
            <person name="Liu J."/>
            <person name="Lv H."/>
            <person name="Li J."/>
            <person name="Wang J."/>
            <person name="Deng Y."/>
            <person name="Ran L."/>
            <person name="Shi X."/>
            <person name="Wang X."/>
            <person name="Wu Q."/>
            <person name="Li C."/>
            <person name="Ren X."/>
            <person name="Wang J."/>
            <person name="Wang X."/>
            <person name="Li D."/>
            <person name="Liu D."/>
            <person name="Zhang X."/>
            <person name="Ji Z."/>
            <person name="Zhao W."/>
            <person name="Sun Y."/>
            <person name="Zhang Z."/>
            <person name="Bao J."/>
            <person name="Han Y."/>
            <person name="Dong L."/>
            <person name="Ji J."/>
            <person name="Chen P."/>
            <person name="Wu S."/>
            <person name="Liu J."/>
            <person name="Xiao Y."/>
            <person name="Bu D."/>
            <person name="Tan J."/>
            <person name="Yang L."/>
            <person name="Ye C."/>
            <person name="Zhang J."/>
            <person name="Xu J."/>
            <person name="Zhou Y."/>
            <person name="Yu Y."/>
            <person name="Zhang B."/>
            <person name="Zhuang S."/>
            <person name="Wei H."/>
            <person name="Liu B."/>
            <person name="Lei M."/>
            <person name="Yu H."/>
            <person name="Li Y."/>
            <person name="Xu H."/>
            <person name="Wei S."/>
            <person name="He X."/>
            <person name="Fang L."/>
            <person name="Zhang Z."/>
            <person name="Zhang Y."/>
            <person name="Huang X."/>
            <person name="Su Z."/>
            <person name="Tong W."/>
            <person name="Li J."/>
            <person name="Tong Z."/>
            <person name="Li S."/>
            <person name="Ye J."/>
            <person name="Wang L."/>
            <person name="Fang L."/>
            <person name="Lei T."/>
            <person name="Chen C.-S."/>
            <person name="Chen H.-C."/>
            <person name="Xu Z."/>
            <person name="Li H."/>
            <person name="Huang H."/>
            <person name="Zhang F."/>
            <person name="Xu H."/>
            <person name="Li N."/>
            <person name="Zhao C."/>
            <person name="Li S."/>
            <person name="Dong L."/>
            <person name="Huang Y."/>
            <person name="Li L."/>
            <person name="Xi Y."/>
            <person name="Qi Q."/>
            <person name="Li W."/>
            <person name="Zhang B."/>
            <person name="Hu W."/>
            <person name="Zhang Y."/>
            <person name="Tian X."/>
            <person name="Jiao Y."/>
            <person name="Liang X."/>
            <person name="Jin J."/>
            <person name="Gao L."/>
            <person name="Zheng W."/>
            <person name="Hao B."/>
            <person name="Liu S.-M."/>
            <person name="Wang W."/>
            <person name="Yuan L."/>
            <person name="Cao M."/>
            <person name="McDermott J."/>
            <person name="Samudrala R."/>
            <person name="Wang J."/>
            <person name="Wong G.K.-S."/>
            <person name="Yang H."/>
        </authorList>
    </citation>
    <scope>NUCLEOTIDE SEQUENCE [LARGE SCALE GENOMIC DNA]</scope>
    <source>
        <strain>cv. 93-11</strain>
    </source>
</reference>